<reference key="1">
    <citation type="submission" date="2004-11" db="EMBL/GenBank/DDBJ databases">
        <authorList>
            <consortium name="The German cDNA consortium"/>
        </authorList>
    </citation>
    <scope>NUCLEOTIDE SEQUENCE [LARGE SCALE MRNA]</scope>
    <source>
        <tissue>Kidney</tissue>
    </source>
</reference>
<protein>
    <recommendedName>
        <fullName>Mitochondrial dynamics protein MID51</fullName>
    </recommendedName>
    <alternativeName>
        <fullName>Mitochondrial dynamics protein of 51 kDa homolog</fullName>
    </alternativeName>
    <alternativeName>
        <fullName>Mitochondrial elongation factor 1</fullName>
    </alternativeName>
    <alternativeName>
        <fullName>Smith-Magenis syndrome chromosomal region candidate gene 7 protein-like</fullName>
    </alternativeName>
</protein>
<dbReference type="EMBL" id="CR858608">
    <property type="protein sequence ID" value="CAH90830.1"/>
    <property type="molecule type" value="mRNA"/>
</dbReference>
<dbReference type="RefSeq" id="NP_001125473.1">
    <property type="nucleotide sequence ID" value="NM_001132001.1"/>
</dbReference>
<dbReference type="SMR" id="Q5RBN0"/>
<dbReference type="STRING" id="9601.ENSPPYP00000024294"/>
<dbReference type="GeneID" id="100172382"/>
<dbReference type="KEGG" id="pon:100172382"/>
<dbReference type="CTD" id="54471"/>
<dbReference type="eggNOG" id="KOG4542">
    <property type="taxonomic scope" value="Eukaryota"/>
</dbReference>
<dbReference type="InParanoid" id="Q5RBN0"/>
<dbReference type="OrthoDB" id="5964386at2759"/>
<dbReference type="Proteomes" id="UP000001595">
    <property type="component" value="Unplaced"/>
</dbReference>
<dbReference type="GO" id="GO:0005741">
    <property type="term" value="C:mitochondrial outer membrane"/>
    <property type="evidence" value="ECO:0000250"/>
    <property type="project" value="UniProtKB"/>
</dbReference>
<dbReference type="GO" id="GO:0005739">
    <property type="term" value="C:mitochondrion"/>
    <property type="evidence" value="ECO:0000250"/>
    <property type="project" value="UniProtKB"/>
</dbReference>
<dbReference type="GO" id="GO:0000166">
    <property type="term" value="F:nucleotide binding"/>
    <property type="evidence" value="ECO:0007669"/>
    <property type="project" value="UniProtKB-KW"/>
</dbReference>
<dbReference type="GO" id="GO:0000266">
    <property type="term" value="P:mitochondrial fission"/>
    <property type="evidence" value="ECO:0000250"/>
    <property type="project" value="UniProtKB"/>
</dbReference>
<dbReference type="GO" id="GO:0090141">
    <property type="term" value="P:positive regulation of mitochondrial fission"/>
    <property type="evidence" value="ECO:0000250"/>
    <property type="project" value="UniProtKB"/>
</dbReference>
<dbReference type="GO" id="GO:0010636">
    <property type="term" value="P:positive regulation of mitochondrial fusion"/>
    <property type="evidence" value="ECO:0000250"/>
    <property type="project" value="UniProtKB"/>
</dbReference>
<dbReference type="GO" id="GO:0090314">
    <property type="term" value="P:positive regulation of protein targeting to membrane"/>
    <property type="evidence" value="ECO:0000250"/>
    <property type="project" value="UniProtKB"/>
</dbReference>
<dbReference type="FunFam" id="1.10.1410.40:FF:000003">
    <property type="entry name" value="Mitochondrial dynamics protein MID51"/>
    <property type="match status" value="1"/>
</dbReference>
<dbReference type="FunFam" id="3.30.460.90:FF:000002">
    <property type="entry name" value="Mitochondrial dynamics protein MID51"/>
    <property type="match status" value="1"/>
</dbReference>
<dbReference type="Gene3D" id="1.10.1410.40">
    <property type="match status" value="1"/>
</dbReference>
<dbReference type="Gene3D" id="3.30.460.90">
    <property type="match status" value="1"/>
</dbReference>
<dbReference type="InterPro" id="IPR046906">
    <property type="entry name" value="Mab-21_HhH/H2TH-like"/>
</dbReference>
<dbReference type="InterPro" id="IPR024810">
    <property type="entry name" value="MAB21L/cGLR"/>
</dbReference>
<dbReference type="InterPro" id="IPR045909">
    <property type="entry name" value="MID49/MID51"/>
</dbReference>
<dbReference type="InterPro" id="IPR049097">
    <property type="entry name" value="MID51-like_C"/>
</dbReference>
<dbReference type="PANTHER" id="PTHR16451:SF12">
    <property type="entry name" value="MITOCHONDRIAL DYNAMICS PROTEIN MIEF1"/>
    <property type="match status" value="1"/>
</dbReference>
<dbReference type="PANTHER" id="PTHR16451">
    <property type="entry name" value="MITOCHONDRIAL DYNAMICS PROTEINS 49/51 FAMILY MEMBER"/>
    <property type="match status" value="1"/>
</dbReference>
<dbReference type="Pfam" id="PF20266">
    <property type="entry name" value="Mab-21_C"/>
    <property type="match status" value="1"/>
</dbReference>
<dbReference type="Pfam" id="PF21297">
    <property type="entry name" value="MID51-like_C"/>
    <property type="match status" value="1"/>
</dbReference>
<dbReference type="SMART" id="SM01265">
    <property type="entry name" value="Mab-21"/>
    <property type="match status" value="1"/>
</dbReference>
<comment type="function">
    <text evidence="3">Mitochondrial outer membrane protein which regulates mitochondrial fission/fusion dynamics. Promotes the recruitment and association of the fission mediator dynamin-related protein 1 (DNM1L) to the mitochondrial surface independently of the mitochondrial fission FIS1 and MFF proteins. Regulates DNM1L GTPase activity and DNM1L oligomerization. Binds ADP and can also bind GDP, although with lower affinity. Does not bind CDP, UDP, ATP, AMP or GTP. Inhibits DNM1L GTPase activity in the absence of bound ADP. Requires ADP to stimulate DNM1L GTPase activity and the assembly of DNM1L into long, oligomeric tubules with a spiral pattern, as opposed to the ring-like DNM1L oligomers observed in the absence of bound ADP. Does not require ADP for its function in recruiting DNM1L.</text>
</comment>
<comment type="subunit">
    <text evidence="3">Homodimer. Interacts with DNM1L.</text>
</comment>
<comment type="subcellular location">
    <subcellularLocation>
        <location evidence="3">Mitochondrion outer membrane</location>
        <topology evidence="3">Single-pass membrane protein</topology>
    </subcellularLocation>
</comment>
<comment type="similarity">
    <text evidence="6">Belongs to the MID49/MID51 family.</text>
</comment>
<gene>
    <name type="primary">MIEF1</name>
    <name type="synonym">MID51</name>
    <name type="synonym">SMCR7L</name>
</gene>
<organism>
    <name type="scientific">Pongo abelii</name>
    <name type="common">Sumatran orangutan</name>
    <name type="synonym">Pongo pygmaeus abelii</name>
    <dbReference type="NCBI Taxonomy" id="9601"/>
    <lineage>
        <taxon>Eukaryota</taxon>
        <taxon>Metazoa</taxon>
        <taxon>Chordata</taxon>
        <taxon>Craniata</taxon>
        <taxon>Vertebrata</taxon>
        <taxon>Euteleostomi</taxon>
        <taxon>Mammalia</taxon>
        <taxon>Eutheria</taxon>
        <taxon>Euarchontoglires</taxon>
        <taxon>Primates</taxon>
        <taxon>Haplorrhini</taxon>
        <taxon>Catarrhini</taxon>
        <taxon>Hominidae</taxon>
        <taxon>Pongo</taxon>
    </lineage>
</organism>
<accession>Q5RBN0</accession>
<keyword id="KW-0472">Membrane</keyword>
<keyword id="KW-0496">Mitochondrion</keyword>
<keyword id="KW-1000">Mitochondrion outer membrane</keyword>
<keyword id="KW-0547">Nucleotide-binding</keyword>
<keyword id="KW-0597">Phosphoprotein</keyword>
<keyword id="KW-1185">Reference proteome</keyword>
<keyword id="KW-0812">Transmembrane</keyword>
<keyword id="KW-1133">Transmembrane helix</keyword>
<sequence>MAGAGERKGKKDDNGIGTAIDFVLSNARLVLGVGGAAMLGIATLAVKRMYDRAISAPTSPTRLSHSGKRSWEEPNWMGSPQLLNRDMKTGLSRSLQTLPTDSSAFDTDTFCPPRPKPVARKGQVDLKKSRLRMSLQEKLLPYYRNRAAIPAGEQARAKQAAVDICAELRSFLRAKLPDMPLRDVYLSGSLYDDLQVVTADHIQLIVPLVLEQNLWSCIPGEDTIMNVPGFFLVRRENPEYFPRGSSYWDRCVVGGYLSPKTVADTFEKVVAGSINWPAIGSLLDYVIRPAPPPEALTLEVQYERDKHLFIDFLPSVTLGDTVLVAKPHRLAQYDNLWRLSLRPAETARLRALDQADSGCRSLCLKILKAICKSTPALGHLTASQLTNVILHLAQEEADWSPDMLADRFLQALRGLISYLEAGVLPSALNPKVNLFAELTPEEIDELGYTLYCSLSEPEVLLQT</sequence>
<proteinExistence type="evidence at transcript level"/>
<name>MID51_PONAB</name>
<feature type="chain" id="PRO_0000310450" description="Mitochondrial dynamics protein MID51">
    <location>
        <begin position="1"/>
        <end position="463"/>
    </location>
</feature>
<feature type="topological domain" description="Mitochondrial intermembrane" evidence="4">
    <location>
        <begin position="1"/>
        <end position="23"/>
    </location>
</feature>
<feature type="transmembrane region" description="Helical" evidence="4">
    <location>
        <begin position="24"/>
        <end position="46"/>
    </location>
</feature>
<feature type="topological domain" description="Cytoplasmic" evidence="4">
    <location>
        <begin position="47"/>
        <end position="463"/>
    </location>
</feature>
<feature type="region of interest" description="Dimerization" evidence="1">
    <location>
        <begin position="49"/>
        <end position="195"/>
    </location>
</feature>
<feature type="region of interest" description="Disordered" evidence="5">
    <location>
        <begin position="57"/>
        <end position="79"/>
    </location>
</feature>
<feature type="region of interest" description="Disordered" evidence="5">
    <location>
        <begin position="104"/>
        <end position="123"/>
    </location>
</feature>
<feature type="region of interest" description="Important for interaction with DNM1L" evidence="1">
    <location>
        <begin position="160"/>
        <end position="169"/>
    </location>
</feature>
<feature type="region of interest" description="Important for interaction with DNM1L" evidence="1">
    <location>
        <begin position="234"/>
        <end position="243"/>
    </location>
</feature>
<feature type="binding site" evidence="1">
    <location>
        <position position="187"/>
    </location>
    <ligand>
        <name>ADP</name>
        <dbReference type="ChEBI" id="CHEBI:456216"/>
    </ligand>
</feature>
<feature type="binding site" evidence="1">
    <location>
        <position position="189"/>
    </location>
    <ligand>
        <name>ADP</name>
        <dbReference type="ChEBI" id="CHEBI:456216"/>
    </ligand>
</feature>
<feature type="binding site" evidence="1">
    <location>
        <position position="201"/>
    </location>
    <ligand>
        <name>ADP</name>
        <dbReference type="ChEBI" id="CHEBI:456216"/>
    </ligand>
</feature>
<feature type="binding site" evidence="1">
    <location>
        <position position="340"/>
    </location>
    <ligand>
        <name>ADP</name>
        <dbReference type="ChEBI" id="CHEBI:456216"/>
    </ligand>
</feature>
<feature type="binding site" evidence="1">
    <location>
        <position position="342"/>
    </location>
    <ligand>
        <name>ADP</name>
        <dbReference type="ChEBI" id="CHEBI:456216"/>
    </ligand>
</feature>
<feature type="binding site" evidence="1">
    <location>
        <position position="368"/>
    </location>
    <ligand>
        <name>ADP</name>
        <dbReference type="ChEBI" id="CHEBI:456216"/>
    </ligand>
</feature>
<feature type="modified residue" description="Phosphoserine" evidence="3">
    <location>
        <position position="55"/>
    </location>
</feature>
<feature type="modified residue" description="Phosphoserine" evidence="3">
    <location>
        <position position="59"/>
    </location>
</feature>
<feature type="modified residue" description="Phosphoserine" evidence="2">
    <location>
        <position position="79"/>
    </location>
</feature>
<feature type="modified residue" description="Phosphoserine" evidence="3">
    <location>
        <position position="94"/>
    </location>
</feature>
<evidence type="ECO:0000250" key="1"/>
<evidence type="ECO:0000250" key="2">
    <source>
        <dbReference type="UniProtKB" id="Q8BGV8"/>
    </source>
</evidence>
<evidence type="ECO:0000250" key="3">
    <source>
        <dbReference type="UniProtKB" id="Q9NQG6"/>
    </source>
</evidence>
<evidence type="ECO:0000255" key="4"/>
<evidence type="ECO:0000256" key="5">
    <source>
        <dbReference type="SAM" id="MobiDB-lite"/>
    </source>
</evidence>
<evidence type="ECO:0000305" key="6"/>